<dbReference type="EC" id="3.5.99.7" evidence="1"/>
<dbReference type="EMBL" id="CP000629">
    <property type="protein sequence ID" value="ACM30009.1"/>
    <property type="molecule type" value="Genomic_DNA"/>
</dbReference>
<dbReference type="RefSeq" id="WP_012650240.1">
    <property type="nucleotide sequence ID" value="NC_011983.1"/>
</dbReference>
<dbReference type="SMR" id="B9JJB7"/>
<dbReference type="STRING" id="311403.Arad_8832"/>
<dbReference type="KEGG" id="ara:Arad_8832"/>
<dbReference type="eggNOG" id="COG2515">
    <property type="taxonomic scope" value="Bacteria"/>
</dbReference>
<dbReference type="HOGENOM" id="CLU_048897_2_1_5"/>
<dbReference type="Proteomes" id="UP000001600">
    <property type="component" value="Chromosome 2"/>
</dbReference>
<dbReference type="GO" id="GO:0008660">
    <property type="term" value="F:1-aminocyclopropane-1-carboxylate deaminase activity"/>
    <property type="evidence" value="ECO:0007669"/>
    <property type="project" value="UniProtKB-UniRule"/>
</dbReference>
<dbReference type="GO" id="GO:0019148">
    <property type="term" value="F:D-cysteine desulfhydrase activity"/>
    <property type="evidence" value="ECO:0007669"/>
    <property type="project" value="TreeGrafter"/>
</dbReference>
<dbReference type="GO" id="GO:0030170">
    <property type="term" value="F:pyridoxal phosphate binding"/>
    <property type="evidence" value="ECO:0007669"/>
    <property type="project" value="InterPro"/>
</dbReference>
<dbReference type="GO" id="GO:0018871">
    <property type="term" value="P:1-aminocyclopropane-1-carboxylate metabolic process"/>
    <property type="evidence" value="ECO:0007669"/>
    <property type="project" value="UniProtKB-UniRule"/>
</dbReference>
<dbReference type="GO" id="GO:0009310">
    <property type="term" value="P:amine catabolic process"/>
    <property type="evidence" value="ECO:0007669"/>
    <property type="project" value="InterPro"/>
</dbReference>
<dbReference type="CDD" id="cd06449">
    <property type="entry name" value="ACCD"/>
    <property type="match status" value="1"/>
</dbReference>
<dbReference type="FunFam" id="3.40.50.1100:FF:000048">
    <property type="entry name" value="1-aminocyclopropane-1-carboxylate deaminase"/>
    <property type="match status" value="1"/>
</dbReference>
<dbReference type="Gene3D" id="3.40.50.1100">
    <property type="match status" value="2"/>
</dbReference>
<dbReference type="HAMAP" id="MF_00807">
    <property type="entry name" value="ACC_deaminase"/>
    <property type="match status" value="1"/>
</dbReference>
<dbReference type="InterPro" id="IPR027278">
    <property type="entry name" value="ACCD_DCysDesulf"/>
</dbReference>
<dbReference type="InterPro" id="IPR005965">
    <property type="entry name" value="ACP_carboxylate_deaminase"/>
</dbReference>
<dbReference type="InterPro" id="IPR020601">
    <property type="entry name" value="ACP_carboxylate_deaminase_bac"/>
</dbReference>
<dbReference type="InterPro" id="IPR001926">
    <property type="entry name" value="TrpB-like_PALP"/>
</dbReference>
<dbReference type="InterPro" id="IPR036052">
    <property type="entry name" value="TrpB-like_PALP_sf"/>
</dbReference>
<dbReference type="NCBIfam" id="TIGR01274">
    <property type="entry name" value="ACC_deam"/>
    <property type="match status" value="1"/>
</dbReference>
<dbReference type="PANTHER" id="PTHR43780">
    <property type="entry name" value="1-AMINOCYCLOPROPANE-1-CARBOXYLATE DEAMINASE-RELATED"/>
    <property type="match status" value="1"/>
</dbReference>
<dbReference type="PANTHER" id="PTHR43780:SF2">
    <property type="entry name" value="1-AMINOCYCLOPROPANE-1-CARBOXYLATE DEAMINASE-RELATED"/>
    <property type="match status" value="1"/>
</dbReference>
<dbReference type="Pfam" id="PF00291">
    <property type="entry name" value="PALP"/>
    <property type="match status" value="1"/>
</dbReference>
<dbReference type="PIRSF" id="PIRSF006278">
    <property type="entry name" value="ACCD_DCysDesulf"/>
    <property type="match status" value="1"/>
</dbReference>
<dbReference type="SUPFAM" id="SSF53686">
    <property type="entry name" value="Tryptophan synthase beta subunit-like PLP-dependent enzymes"/>
    <property type="match status" value="1"/>
</dbReference>
<comment type="function">
    <text evidence="1">Catalyzes a cyclopropane ring-opening reaction, the irreversible conversion of 1-aminocyclopropane-1-carboxylate (ACC) to ammonia and alpha-ketobutyrate. Allows growth on ACC as a nitrogen source.</text>
</comment>
<comment type="catalytic activity">
    <reaction evidence="1">
        <text>1-aminocyclopropane-1-carboxylate + H2O = 2-oxobutanoate + NH4(+)</text>
        <dbReference type="Rhea" id="RHEA:16933"/>
        <dbReference type="ChEBI" id="CHEBI:15377"/>
        <dbReference type="ChEBI" id="CHEBI:16763"/>
        <dbReference type="ChEBI" id="CHEBI:28938"/>
        <dbReference type="ChEBI" id="CHEBI:58360"/>
        <dbReference type="EC" id="3.5.99.7"/>
    </reaction>
</comment>
<comment type="cofactor">
    <cofactor evidence="1">
        <name>pyridoxal 5'-phosphate</name>
        <dbReference type="ChEBI" id="CHEBI:597326"/>
    </cofactor>
</comment>
<comment type="subunit">
    <text evidence="1">Homotrimer.</text>
</comment>
<comment type="similarity">
    <text evidence="1">Belongs to the ACC deaminase/D-cysteine desulfhydrase family.</text>
</comment>
<proteinExistence type="inferred from homology"/>
<protein>
    <recommendedName>
        <fullName evidence="1">1-aminocyclopropane-1-carboxylate deaminase</fullName>
        <shortName evidence="1">ACC deaminase</shortName>
        <shortName evidence="1">ACCD</shortName>
        <ecNumber evidence="1">3.5.99.7</ecNumber>
    </recommendedName>
</protein>
<name>1A1D_RHIR8</name>
<gene>
    <name evidence="1" type="primary">acdS</name>
    <name type="ordered locus">Arad_8832</name>
</gene>
<sequence length="337" mass="36982">MLEKFERYPLTFGPTHIEKLERLSEHLGGKVQLYAKREDCNSGLAFGGNKLRKLEYIIPDAIASNADTLVSIGGVQSNHTRMIAAVAAKIGFKCRLVQESWVPHEDAVYDRVGNILLSRIMGADVQMVDEGFDIGIRQSWEEAIEDVKAKGGKPYPIPAGASVHKYGGLGYVGFAEEVRVQEEELGFKFDYIVVCTVTGSTHAGMTVGFAKDGRERQVIGIDASFTPAQTKAQVLEIARRTAELVELGRELSSDDIVLIEDYAYPVYGVPSDETKEAIRLCARLEGMITDPVYEGKSMQGMIDLVKKGYFPEGSKVLYAHLGGAPAINGYAYTFRNG</sequence>
<organism>
    <name type="scientific">Rhizobium rhizogenes (strain K84 / ATCC BAA-868)</name>
    <name type="common">Agrobacterium radiobacter</name>
    <dbReference type="NCBI Taxonomy" id="311403"/>
    <lineage>
        <taxon>Bacteria</taxon>
        <taxon>Pseudomonadati</taxon>
        <taxon>Pseudomonadota</taxon>
        <taxon>Alphaproteobacteria</taxon>
        <taxon>Hyphomicrobiales</taxon>
        <taxon>Rhizobiaceae</taxon>
        <taxon>Rhizobium/Agrobacterium group</taxon>
        <taxon>Rhizobium</taxon>
    </lineage>
</organism>
<accession>B9JJB7</accession>
<reference key="1">
    <citation type="journal article" date="2009" name="J. Bacteriol.">
        <title>Genome sequences of three Agrobacterium biovars help elucidate the evolution of multichromosome genomes in bacteria.</title>
        <authorList>
            <person name="Slater S.C."/>
            <person name="Goldman B.S."/>
            <person name="Goodner B."/>
            <person name="Setubal J.C."/>
            <person name="Farrand S.K."/>
            <person name="Nester E.W."/>
            <person name="Burr T.J."/>
            <person name="Banta L."/>
            <person name="Dickerman A.W."/>
            <person name="Paulsen I."/>
            <person name="Otten L."/>
            <person name="Suen G."/>
            <person name="Welch R."/>
            <person name="Almeida N.F."/>
            <person name="Arnold F."/>
            <person name="Burton O.T."/>
            <person name="Du Z."/>
            <person name="Ewing A."/>
            <person name="Godsy E."/>
            <person name="Heisel S."/>
            <person name="Houmiel K.L."/>
            <person name="Jhaveri J."/>
            <person name="Lu J."/>
            <person name="Miller N.M."/>
            <person name="Norton S."/>
            <person name="Chen Q."/>
            <person name="Phoolcharoen W."/>
            <person name="Ohlin V."/>
            <person name="Ondrusek D."/>
            <person name="Pride N."/>
            <person name="Stricklin S.L."/>
            <person name="Sun J."/>
            <person name="Wheeler C."/>
            <person name="Wilson L."/>
            <person name="Zhu H."/>
            <person name="Wood D.W."/>
        </authorList>
    </citation>
    <scope>NUCLEOTIDE SEQUENCE [LARGE SCALE GENOMIC DNA]</scope>
    <source>
        <strain>K84 / ATCC BAA-868</strain>
    </source>
</reference>
<keyword id="KW-0378">Hydrolase</keyword>
<keyword id="KW-0663">Pyridoxal phosphate</keyword>
<evidence type="ECO:0000255" key="1">
    <source>
        <dbReference type="HAMAP-Rule" id="MF_00807"/>
    </source>
</evidence>
<feature type="chain" id="PRO_1000148574" description="1-aminocyclopropane-1-carboxylate deaminase">
    <location>
        <begin position="1"/>
        <end position="337"/>
    </location>
</feature>
<feature type="active site" description="Nucleophile" evidence="1">
    <location>
        <position position="77"/>
    </location>
</feature>
<feature type="modified residue" description="N6-(pyridoxal phosphate)lysine" evidence="1">
    <location>
        <position position="50"/>
    </location>
</feature>